<name>QSEF_ECO57</name>
<dbReference type="EMBL" id="AE005174">
    <property type="protein sequence ID" value="AAG57668.1"/>
    <property type="molecule type" value="Genomic_DNA"/>
</dbReference>
<dbReference type="EMBL" id="BA000007">
    <property type="protein sequence ID" value="BAB36843.1"/>
    <property type="molecule type" value="Genomic_DNA"/>
</dbReference>
<dbReference type="PIR" id="D91056">
    <property type="entry name" value="D91056"/>
</dbReference>
<dbReference type="PIR" id="H85900">
    <property type="entry name" value="H85900"/>
</dbReference>
<dbReference type="SMR" id="P0AFU5"/>
<dbReference type="STRING" id="155864.Z3830"/>
<dbReference type="KEGG" id="ece:Z3830"/>
<dbReference type="KEGG" id="ecs:ECs_3420"/>
<dbReference type="PATRIC" id="fig|386585.9.peg.3574"/>
<dbReference type="eggNOG" id="COG2204">
    <property type="taxonomic scope" value="Bacteria"/>
</dbReference>
<dbReference type="HOGENOM" id="CLU_000445_0_6_6"/>
<dbReference type="OMA" id="DRNRTEF"/>
<dbReference type="Proteomes" id="UP000000558">
    <property type="component" value="Chromosome"/>
</dbReference>
<dbReference type="Proteomes" id="UP000002519">
    <property type="component" value="Chromosome"/>
</dbReference>
<dbReference type="GO" id="GO:0005737">
    <property type="term" value="C:cytoplasm"/>
    <property type="evidence" value="ECO:0007669"/>
    <property type="project" value="UniProtKB-SubCell"/>
</dbReference>
<dbReference type="GO" id="GO:0005524">
    <property type="term" value="F:ATP binding"/>
    <property type="evidence" value="ECO:0007669"/>
    <property type="project" value="UniProtKB-KW"/>
</dbReference>
<dbReference type="GO" id="GO:0016887">
    <property type="term" value="F:ATP hydrolysis activity"/>
    <property type="evidence" value="ECO:0007669"/>
    <property type="project" value="InterPro"/>
</dbReference>
<dbReference type="GO" id="GO:0003677">
    <property type="term" value="F:DNA binding"/>
    <property type="evidence" value="ECO:0007669"/>
    <property type="project" value="UniProtKB-KW"/>
</dbReference>
<dbReference type="GO" id="GO:0000160">
    <property type="term" value="P:phosphorelay signal transduction system"/>
    <property type="evidence" value="ECO:0007669"/>
    <property type="project" value="UniProtKB-KW"/>
</dbReference>
<dbReference type="GO" id="GO:0006355">
    <property type="term" value="P:regulation of DNA-templated transcription"/>
    <property type="evidence" value="ECO:0007669"/>
    <property type="project" value="InterPro"/>
</dbReference>
<dbReference type="CDD" id="cd00009">
    <property type="entry name" value="AAA"/>
    <property type="match status" value="1"/>
</dbReference>
<dbReference type="FunFam" id="3.40.50.300:FF:000006">
    <property type="entry name" value="DNA-binding transcriptional regulator NtrC"/>
    <property type="match status" value="1"/>
</dbReference>
<dbReference type="FunFam" id="3.40.50.2300:FF:000167">
    <property type="entry name" value="Two-component response regulator GlrR"/>
    <property type="match status" value="1"/>
</dbReference>
<dbReference type="FunFam" id="1.10.10.60:FF:000111">
    <property type="entry name" value="Two-component system response regulator GlrR"/>
    <property type="match status" value="1"/>
</dbReference>
<dbReference type="FunFam" id="1.10.8.60:FF:000034">
    <property type="entry name" value="Two-component system response regulator GlrR"/>
    <property type="match status" value="1"/>
</dbReference>
<dbReference type="Gene3D" id="1.10.8.60">
    <property type="match status" value="1"/>
</dbReference>
<dbReference type="Gene3D" id="3.40.50.2300">
    <property type="match status" value="1"/>
</dbReference>
<dbReference type="Gene3D" id="1.10.10.60">
    <property type="entry name" value="Homeodomain-like"/>
    <property type="match status" value="1"/>
</dbReference>
<dbReference type="Gene3D" id="3.40.50.300">
    <property type="entry name" value="P-loop containing nucleotide triphosphate hydrolases"/>
    <property type="match status" value="1"/>
</dbReference>
<dbReference type="InterPro" id="IPR003593">
    <property type="entry name" value="AAA+_ATPase"/>
</dbReference>
<dbReference type="InterPro" id="IPR011006">
    <property type="entry name" value="CheY-like_superfamily"/>
</dbReference>
<dbReference type="InterPro" id="IPR009057">
    <property type="entry name" value="Homeodomain-like_sf"/>
</dbReference>
<dbReference type="InterPro" id="IPR027417">
    <property type="entry name" value="P-loop_NTPase"/>
</dbReference>
<dbReference type="InterPro" id="IPR001789">
    <property type="entry name" value="Sig_transdc_resp-reg_receiver"/>
</dbReference>
<dbReference type="InterPro" id="IPR002078">
    <property type="entry name" value="Sigma_54_int"/>
</dbReference>
<dbReference type="InterPro" id="IPR025662">
    <property type="entry name" value="Sigma_54_int_dom_ATP-bd_1"/>
</dbReference>
<dbReference type="InterPro" id="IPR025943">
    <property type="entry name" value="Sigma_54_int_dom_ATP-bd_2"/>
</dbReference>
<dbReference type="InterPro" id="IPR025944">
    <property type="entry name" value="Sigma_54_int_dom_CS"/>
</dbReference>
<dbReference type="NCBIfam" id="NF011695">
    <property type="entry name" value="PRK15115.1"/>
    <property type="match status" value="1"/>
</dbReference>
<dbReference type="PANTHER" id="PTHR32071">
    <property type="entry name" value="TRANSCRIPTIONAL REGULATORY PROTEIN"/>
    <property type="match status" value="1"/>
</dbReference>
<dbReference type="PANTHER" id="PTHR32071:SF116">
    <property type="entry name" value="TRANSCRIPTIONAL REGULATORY PROTEIN GLRR"/>
    <property type="match status" value="1"/>
</dbReference>
<dbReference type="Pfam" id="PF00072">
    <property type="entry name" value="Response_reg"/>
    <property type="match status" value="1"/>
</dbReference>
<dbReference type="Pfam" id="PF00158">
    <property type="entry name" value="Sigma54_activat"/>
    <property type="match status" value="1"/>
</dbReference>
<dbReference type="SMART" id="SM00382">
    <property type="entry name" value="AAA"/>
    <property type="match status" value="1"/>
</dbReference>
<dbReference type="SMART" id="SM00448">
    <property type="entry name" value="REC"/>
    <property type="match status" value="1"/>
</dbReference>
<dbReference type="SUPFAM" id="SSF52172">
    <property type="entry name" value="CheY-like"/>
    <property type="match status" value="1"/>
</dbReference>
<dbReference type="SUPFAM" id="SSF46689">
    <property type="entry name" value="Homeodomain-like"/>
    <property type="match status" value="1"/>
</dbReference>
<dbReference type="SUPFAM" id="SSF52540">
    <property type="entry name" value="P-loop containing nucleoside triphosphate hydrolases"/>
    <property type="match status" value="1"/>
</dbReference>
<dbReference type="PROSITE" id="PS50110">
    <property type="entry name" value="RESPONSE_REGULATORY"/>
    <property type="match status" value="1"/>
</dbReference>
<dbReference type="PROSITE" id="PS00675">
    <property type="entry name" value="SIGMA54_INTERACT_1"/>
    <property type="match status" value="1"/>
</dbReference>
<dbReference type="PROSITE" id="PS00676">
    <property type="entry name" value="SIGMA54_INTERACT_2"/>
    <property type="match status" value="1"/>
</dbReference>
<dbReference type="PROSITE" id="PS00688">
    <property type="entry name" value="SIGMA54_INTERACT_3"/>
    <property type="match status" value="1"/>
</dbReference>
<dbReference type="PROSITE" id="PS50045">
    <property type="entry name" value="SIGMA54_INTERACT_4"/>
    <property type="match status" value="1"/>
</dbReference>
<protein>
    <recommendedName>
        <fullName>Transcriptional regulatory protein QseF</fullName>
    </recommendedName>
    <alternativeName>
        <fullName>Quorum-sensing regulator protein F</fullName>
    </alternativeName>
</protein>
<accession>P0AFU5</accession>
<accession>P21712</accession>
<accession>P77512</accession>
<evidence type="ECO:0000255" key="1"/>
<evidence type="ECO:0000255" key="2">
    <source>
        <dbReference type="PROSITE-ProRule" id="PRU00169"/>
    </source>
</evidence>
<evidence type="ECO:0000255" key="3">
    <source>
        <dbReference type="PROSITE-ProRule" id="PRU00193"/>
    </source>
</evidence>
<evidence type="ECO:0000269" key="4">
    <source>
    </source>
</evidence>
<evidence type="ECO:0000269" key="5">
    <source>
    </source>
</evidence>
<evidence type="ECO:0000269" key="6">
    <source>
    </source>
</evidence>
<evidence type="ECO:0000305" key="7"/>
<comment type="function">
    <text evidence="4 5 6">Member of the two-component regulatory system QseF/QseE involved in the regulation of virulence and metabolism in EHEC. Required for pedestal formation in host epithelial cells during infection. Regulates various metabolic and virulence genes, many iron-utilization genes and some two-component systems such as RcsB/RcsC and PhoP/PhoQ. Activates, indirectly, transcription of EspF(U) to induce pedestal formation.</text>
</comment>
<comment type="subcellular location">
    <subcellularLocation>
        <location evidence="7">Cytoplasm</location>
    </subcellularLocation>
</comment>
<comment type="induction">
    <text evidence="4">Induced by epinephrine during late exponential growth, probably via the QseC sensor.</text>
</comment>
<comment type="PTM">
    <text evidence="7">Phosphorylated by QseE.</text>
</comment>
<comment type="disruption phenotype">
    <text evidence="4">Mutants are unable to form pedestals.</text>
</comment>
<gene>
    <name type="primary">qseF</name>
    <name type="synonym">yfhA</name>
    <name type="ordered locus">Z3830</name>
    <name type="ordered locus">ECs3420</name>
</gene>
<keyword id="KW-0067">ATP-binding</keyword>
<keyword id="KW-0963">Cytoplasm</keyword>
<keyword id="KW-0238">DNA-binding</keyword>
<keyword id="KW-0547">Nucleotide-binding</keyword>
<keyword id="KW-0597">Phosphoprotein</keyword>
<keyword id="KW-1185">Reference proteome</keyword>
<keyword id="KW-0804">Transcription</keyword>
<keyword id="KW-0805">Transcription regulation</keyword>
<keyword id="KW-0902">Two-component regulatory system</keyword>
<organism>
    <name type="scientific">Escherichia coli O157:H7</name>
    <dbReference type="NCBI Taxonomy" id="83334"/>
    <lineage>
        <taxon>Bacteria</taxon>
        <taxon>Pseudomonadati</taxon>
        <taxon>Pseudomonadota</taxon>
        <taxon>Gammaproteobacteria</taxon>
        <taxon>Enterobacterales</taxon>
        <taxon>Enterobacteriaceae</taxon>
        <taxon>Escherichia</taxon>
    </lineage>
</organism>
<reference key="1">
    <citation type="journal article" date="2001" name="Nature">
        <title>Genome sequence of enterohaemorrhagic Escherichia coli O157:H7.</title>
        <authorList>
            <person name="Perna N.T."/>
            <person name="Plunkett G. III"/>
            <person name="Burland V."/>
            <person name="Mau B."/>
            <person name="Glasner J.D."/>
            <person name="Rose D.J."/>
            <person name="Mayhew G.F."/>
            <person name="Evans P.S."/>
            <person name="Gregor J."/>
            <person name="Kirkpatrick H.A."/>
            <person name="Posfai G."/>
            <person name="Hackett J."/>
            <person name="Klink S."/>
            <person name="Boutin A."/>
            <person name="Shao Y."/>
            <person name="Miller L."/>
            <person name="Grotbeck E.J."/>
            <person name="Davis N.W."/>
            <person name="Lim A."/>
            <person name="Dimalanta E.T."/>
            <person name="Potamousis K."/>
            <person name="Apodaca J."/>
            <person name="Anantharaman T.S."/>
            <person name="Lin J."/>
            <person name="Yen G."/>
            <person name="Schwartz D.C."/>
            <person name="Welch R.A."/>
            <person name="Blattner F.R."/>
        </authorList>
    </citation>
    <scope>NUCLEOTIDE SEQUENCE [LARGE SCALE GENOMIC DNA]</scope>
    <source>
        <strain>O157:H7 / EDL933 / ATCC 700927 / EHEC</strain>
    </source>
</reference>
<reference key="2">
    <citation type="journal article" date="2001" name="DNA Res.">
        <title>Complete genome sequence of enterohemorrhagic Escherichia coli O157:H7 and genomic comparison with a laboratory strain K-12.</title>
        <authorList>
            <person name="Hayashi T."/>
            <person name="Makino K."/>
            <person name="Ohnishi M."/>
            <person name="Kurokawa K."/>
            <person name="Ishii K."/>
            <person name="Yokoyama K."/>
            <person name="Han C.-G."/>
            <person name="Ohtsubo E."/>
            <person name="Nakayama K."/>
            <person name="Murata T."/>
            <person name="Tanaka M."/>
            <person name="Tobe T."/>
            <person name="Iida T."/>
            <person name="Takami H."/>
            <person name="Honda T."/>
            <person name="Sasakawa C."/>
            <person name="Ogasawara N."/>
            <person name="Yasunaga T."/>
            <person name="Kuhara S."/>
            <person name="Shiba T."/>
            <person name="Hattori M."/>
            <person name="Shinagawa H."/>
        </authorList>
    </citation>
    <scope>NUCLEOTIDE SEQUENCE [LARGE SCALE GENOMIC DNA]</scope>
    <source>
        <strain>O157:H7 / Sakai / RIMD 0509952 / EHEC</strain>
    </source>
</reference>
<reference key="3">
    <citation type="journal article" date="2007" name="J. Bacteriol.">
        <title>A novel two-component signaling system that activates transcription of an enterohemorrhagic Escherichia coli effector involved in remodeling of host actin.</title>
        <authorList>
            <person name="Reading N.C."/>
            <person name="Torres A.G."/>
            <person name="Kendall M.M."/>
            <person name="Hughes D.T."/>
            <person name="Yamamoto K."/>
            <person name="Sperandio V."/>
        </authorList>
    </citation>
    <scope>FUNCTION IN VIRULENCE</scope>
    <scope>INDUCTION</scope>
    <scope>DISRUPTION PHENOTYPE</scope>
    <source>
        <strain>O157:H7 / 86-24 / EHEC</strain>
    </source>
</reference>
<reference key="4">
    <citation type="journal article" date="2009" name="Proc. Natl. Acad. Sci. U.S.A.">
        <title>The two-component system QseEF and the membrane protein QseG link adrenergic and stress sensing to bacterial pathogenesis.</title>
        <authorList>
            <person name="Reading N.C."/>
            <person name="Rasko D.A."/>
            <person name="Torres A.G."/>
            <person name="Sperandio V."/>
        </authorList>
    </citation>
    <scope>FUNCTION</scope>
    <source>
        <strain>O157:H7 / 86-24 / EHEC</strain>
    </source>
</reference>
<reference key="5">
    <citation type="journal article" date="2010" name="Microbiology">
        <title>A transcriptome study of the QseEF two-component system and the QseG membrane protein in enterohaemorrhagic Escherichia coli O157:H7.</title>
        <authorList>
            <person name="Reading N.C."/>
            <person name="Rasko D."/>
            <person name="Torres A.G."/>
            <person name="Sperandio V."/>
        </authorList>
    </citation>
    <scope>FUNCTION</scope>
    <source>
        <strain>O157:H7 / 86-24 / EHEC</strain>
    </source>
</reference>
<sequence>MSHKPAHLLLVDDDPGLLKLLGLRLTSEGYSVVTAESGAEGLRVLNREKVDLVISDLRMDEMDGMQLFAEIQKVQPGMPVIILTAHGSIPDAVAATQQGVFSFLTKPVDKDALYQAIDDALEQSAPATDERWREAIVTRSPLMLRLLEQARLVAQSDVSVLINGQSGTGKEIFAQAIHNASPRNSKPFIAINCGALPEQLLESELFGHARGAFTGAVSNREGLFQAAEGGTLFLDEIGDMPAPLQVKLLRVLQERKVRPLGSNRDIDINVRIISATHRDLPKAMARGEFREDLYYRLNVVSLKIPALAERTEDIPLLANHLLRQAAERHKPFVRAFSTDAMKRLMTASWPGNVRQLVNVIEQCVALTSSPVISDALVEQALEGENTALPTFVEARNQFELNYLRKLLQITKGNVTHAARMAGRNRTEFYKLLSRHELDANDFKE</sequence>
<feature type="chain" id="PRO_0000081378" description="Transcriptional regulatory protein QseF">
    <location>
        <begin position="1"/>
        <end position="444"/>
    </location>
</feature>
<feature type="domain" description="Response regulatory" evidence="2">
    <location>
        <begin position="7"/>
        <end position="121"/>
    </location>
</feature>
<feature type="domain" description="Sigma-54 factor interaction" evidence="3">
    <location>
        <begin position="136"/>
        <end position="366"/>
    </location>
</feature>
<feature type="DNA-binding region" description="H-T-H motif" evidence="1">
    <location>
        <begin position="414"/>
        <end position="433"/>
    </location>
</feature>
<feature type="binding site" evidence="3">
    <location>
        <begin position="164"/>
        <end position="171"/>
    </location>
    <ligand>
        <name>ATP</name>
        <dbReference type="ChEBI" id="CHEBI:30616"/>
    </ligand>
</feature>
<feature type="binding site" evidence="3">
    <location>
        <begin position="227"/>
        <end position="236"/>
    </location>
    <ligand>
        <name>ATP</name>
        <dbReference type="ChEBI" id="CHEBI:30616"/>
    </ligand>
</feature>
<feature type="modified residue" description="4-aspartylphosphate" evidence="2">
    <location>
        <position position="56"/>
    </location>
</feature>
<proteinExistence type="evidence at protein level"/>